<reference key="1">
    <citation type="submission" date="2007-08" db="EMBL/GenBank/DDBJ databases">
        <authorList>
            <consortium name="The Citrobacter koseri Genome Sequencing Project"/>
            <person name="McClelland M."/>
            <person name="Sanderson E.K."/>
            <person name="Porwollik S."/>
            <person name="Spieth J."/>
            <person name="Clifton W.S."/>
            <person name="Latreille P."/>
            <person name="Courtney L."/>
            <person name="Wang C."/>
            <person name="Pepin K."/>
            <person name="Bhonagiri V."/>
            <person name="Nash W."/>
            <person name="Johnson M."/>
            <person name="Thiruvilangam P."/>
            <person name="Wilson R."/>
        </authorList>
    </citation>
    <scope>NUCLEOTIDE SEQUENCE [LARGE SCALE GENOMIC DNA]</scope>
    <source>
        <strain>ATCC BAA-895 / CDC 4225-83 / SGSC4696</strain>
    </source>
</reference>
<proteinExistence type="inferred from homology"/>
<name>RS7_CITK8</name>
<organism>
    <name type="scientific">Citrobacter koseri (strain ATCC BAA-895 / CDC 4225-83 / SGSC4696)</name>
    <dbReference type="NCBI Taxonomy" id="290338"/>
    <lineage>
        <taxon>Bacteria</taxon>
        <taxon>Pseudomonadati</taxon>
        <taxon>Pseudomonadota</taxon>
        <taxon>Gammaproteobacteria</taxon>
        <taxon>Enterobacterales</taxon>
        <taxon>Enterobacteriaceae</taxon>
        <taxon>Citrobacter</taxon>
    </lineage>
</organism>
<evidence type="ECO:0000255" key="1">
    <source>
        <dbReference type="HAMAP-Rule" id="MF_00480"/>
    </source>
</evidence>
<evidence type="ECO:0000305" key="2"/>
<keyword id="KW-1185">Reference proteome</keyword>
<keyword id="KW-0687">Ribonucleoprotein</keyword>
<keyword id="KW-0689">Ribosomal protein</keyword>
<keyword id="KW-0694">RNA-binding</keyword>
<keyword id="KW-0699">rRNA-binding</keyword>
<keyword id="KW-0820">tRNA-binding</keyword>
<sequence>MPRRRVIGQRKILPDPKFGSELLAKFVNILMVDGKKSTAETIVYSALETLAQRSGKSELEAFEVALENVRPTVEVKSRRVGGSTYQVPVEVRPVRRNALAMRWIVEAARKRGDKSMALRLANELTDAADNKGTAVKKREDVHRMAEANKAFAHYRW</sequence>
<dbReference type="EMBL" id="CP000822">
    <property type="protein sequence ID" value="ABV15792.1"/>
    <property type="molecule type" value="Genomic_DNA"/>
</dbReference>
<dbReference type="RefSeq" id="WP_002920113.1">
    <property type="nucleotide sequence ID" value="NC_009792.1"/>
</dbReference>
<dbReference type="SMR" id="A8AQM9"/>
<dbReference type="STRING" id="290338.CKO_04747"/>
<dbReference type="GeneID" id="93251054"/>
<dbReference type="KEGG" id="cko:CKO_04747"/>
<dbReference type="HOGENOM" id="CLU_072226_1_1_6"/>
<dbReference type="OrthoDB" id="9807653at2"/>
<dbReference type="Proteomes" id="UP000008148">
    <property type="component" value="Chromosome"/>
</dbReference>
<dbReference type="GO" id="GO:0015935">
    <property type="term" value="C:small ribosomal subunit"/>
    <property type="evidence" value="ECO:0007669"/>
    <property type="project" value="InterPro"/>
</dbReference>
<dbReference type="GO" id="GO:0019843">
    <property type="term" value="F:rRNA binding"/>
    <property type="evidence" value="ECO:0007669"/>
    <property type="project" value="UniProtKB-UniRule"/>
</dbReference>
<dbReference type="GO" id="GO:0003735">
    <property type="term" value="F:structural constituent of ribosome"/>
    <property type="evidence" value="ECO:0007669"/>
    <property type="project" value="InterPro"/>
</dbReference>
<dbReference type="GO" id="GO:0000049">
    <property type="term" value="F:tRNA binding"/>
    <property type="evidence" value="ECO:0007669"/>
    <property type="project" value="UniProtKB-UniRule"/>
</dbReference>
<dbReference type="GO" id="GO:0006412">
    <property type="term" value="P:translation"/>
    <property type="evidence" value="ECO:0007669"/>
    <property type="project" value="UniProtKB-UniRule"/>
</dbReference>
<dbReference type="CDD" id="cd14869">
    <property type="entry name" value="uS7_Bacteria"/>
    <property type="match status" value="1"/>
</dbReference>
<dbReference type="FunFam" id="1.10.455.10:FF:000001">
    <property type="entry name" value="30S ribosomal protein S7"/>
    <property type="match status" value="1"/>
</dbReference>
<dbReference type="Gene3D" id="1.10.455.10">
    <property type="entry name" value="Ribosomal protein S7 domain"/>
    <property type="match status" value="1"/>
</dbReference>
<dbReference type="HAMAP" id="MF_00480_B">
    <property type="entry name" value="Ribosomal_uS7_B"/>
    <property type="match status" value="1"/>
</dbReference>
<dbReference type="InterPro" id="IPR000235">
    <property type="entry name" value="Ribosomal_uS7"/>
</dbReference>
<dbReference type="InterPro" id="IPR005717">
    <property type="entry name" value="Ribosomal_uS7_bac/org-type"/>
</dbReference>
<dbReference type="InterPro" id="IPR020606">
    <property type="entry name" value="Ribosomal_uS7_CS"/>
</dbReference>
<dbReference type="InterPro" id="IPR023798">
    <property type="entry name" value="Ribosomal_uS7_dom"/>
</dbReference>
<dbReference type="InterPro" id="IPR036823">
    <property type="entry name" value="Ribosomal_uS7_dom_sf"/>
</dbReference>
<dbReference type="NCBIfam" id="TIGR01029">
    <property type="entry name" value="rpsG_bact"/>
    <property type="match status" value="1"/>
</dbReference>
<dbReference type="PANTHER" id="PTHR11205">
    <property type="entry name" value="RIBOSOMAL PROTEIN S7"/>
    <property type="match status" value="1"/>
</dbReference>
<dbReference type="Pfam" id="PF00177">
    <property type="entry name" value="Ribosomal_S7"/>
    <property type="match status" value="1"/>
</dbReference>
<dbReference type="PIRSF" id="PIRSF002122">
    <property type="entry name" value="RPS7p_RPS7a_RPS5e_RPS7o"/>
    <property type="match status" value="1"/>
</dbReference>
<dbReference type="SUPFAM" id="SSF47973">
    <property type="entry name" value="Ribosomal protein S7"/>
    <property type="match status" value="1"/>
</dbReference>
<dbReference type="PROSITE" id="PS00052">
    <property type="entry name" value="RIBOSOMAL_S7"/>
    <property type="match status" value="1"/>
</dbReference>
<feature type="chain" id="PRO_1000014173" description="Small ribosomal subunit protein uS7">
    <location>
        <begin position="1"/>
        <end position="156"/>
    </location>
</feature>
<protein>
    <recommendedName>
        <fullName evidence="1">Small ribosomal subunit protein uS7</fullName>
    </recommendedName>
    <alternativeName>
        <fullName evidence="2">30S ribosomal protein S7</fullName>
    </alternativeName>
</protein>
<comment type="function">
    <text evidence="1">One of the primary rRNA binding proteins, it binds directly to 16S rRNA where it nucleates assembly of the head domain of the 30S subunit. Is located at the subunit interface close to the decoding center, probably blocks exit of the E-site tRNA.</text>
</comment>
<comment type="subunit">
    <text evidence="1">Part of the 30S ribosomal subunit. Contacts proteins S9 and S11.</text>
</comment>
<comment type="similarity">
    <text evidence="1">Belongs to the universal ribosomal protein uS7 family.</text>
</comment>
<accession>A8AQM9</accession>
<gene>
    <name evidence="1" type="primary">rpsG</name>
    <name type="ordered locus">CKO_04747</name>
</gene>